<accession>B3LVQ1</accession>
<keyword id="KW-0131">Cell cycle</keyword>
<keyword id="KW-0132">Cell division</keyword>
<keyword id="KW-0175">Coiled coil</keyword>
<keyword id="KW-0963">Cytoplasm</keyword>
<keyword id="KW-0217">Developmental protein</keyword>
<keyword id="KW-0221">Differentiation</keyword>
<keyword id="KW-0469">Meiosis</keyword>
<keyword id="KW-0498">Mitosis</keyword>
<keyword id="KW-0539">Nucleus</keyword>
<keyword id="KW-0597">Phosphoprotein</keyword>
<keyword id="KW-1185">Reference proteome</keyword>
<keyword id="KW-0744">Spermatogenesis</keyword>
<sequence length="682" mass="74776">MFEQNQKTIFVLDHTRYFSIASEDYISMDFLKGKPSVDTGTGAGVGGASGLGTQFSKSLWTCACESSIEYCRVVWDLFPGKKHVRFIVSDTAAHIVNTWSTSTQNMSHVMNAMVMVGVPSRSMPQSSDYSVIHGLRAAIEALAEPTDEQLATIASGEPVHIPNEGRVICITSARDNTSMKSLEDIFNTVLIQQNALAGPPAKKGLAIDHCHLVILNIVPLGVESLVTNRGLLNISPLLDVEIHTVSAPDISHKLTHLILDHYNLASTTVTNIPMKEEQNANSSANYDVEILHSRSAHSIACGPDFSLPTSIKPGATYETVTLKWCTPRGCGSADLQPCLGQFLVTPVDVTSRPSSCLINFLLNGRSVLLEMPRKAGSKATSHMLSARGGEIFIHSLCITRSCMDEAPAIGDGPGGRVTDYRTTELGQLMKMSRMVPLKAKDPTAPGLPRRMPRYFPLTNGSSILFHLQRHISWMPHFLHLLVKEDMDKQEEVRCQQHIHELYKSASRGDMLPFTHTNGARLKLSKAKDQYRLLYRELEQLIHLNATTVHHKNLLESLQSLRAAYGEAKSEPNSSLLRSYTESPHSPERLEPIPSGGSSGSNSNSLLKASKRRMSSCGQRSLLDIISSAERSQANKRLDFSGRLCTPLGQVAKLYPDFGNKEKDSLLAGTTAAPNVKEESIRS</sequence>
<feature type="chain" id="PRO_0000385339" description="Protein asunder">
    <location>
        <begin position="1"/>
        <end position="682"/>
    </location>
</feature>
<feature type="region of interest" description="Disordered" evidence="3">
    <location>
        <begin position="571"/>
        <end position="612"/>
    </location>
</feature>
<feature type="coiled-coil region" evidence="2">
    <location>
        <begin position="517"/>
        <end position="570"/>
    </location>
</feature>
<feature type="short sequence motif" description="Nuclear localization signal (NLS)" evidence="1">
    <location>
        <begin position="606"/>
        <end position="612"/>
    </location>
</feature>
<feature type="compositionally biased region" description="Polar residues" evidence="3">
    <location>
        <begin position="571"/>
        <end position="583"/>
    </location>
</feature>
<comment type="function">
    <text evidence="1">Component of the integrator complex, a multiprotein complex that terminates RNA polymerase II (Pol II) transcription in the promoter-proximal region of genes. The integrator complex provides a quality checkpoint during transcription elongation by driving premature transcription termination of transcripts that are unfavorably configured for transcriptional elongation: the complex terminates transcription by (1) catalyzing dephosphorylation of the C-terminal domain (CTD) of Pol II subunit Polr2A/Rbp1 and Spt5, and (2) degrading the exiting nascent RNA transcript via endonuclease activity. The integrator complex is also involved in the 3'-end processing of the U7 snRNA, and also the spliceosomal snRNAs U1, U2, U4 and U5.</text>
</comment>
<comment type="subunit">
    <text evidence="1">Belongs to the multiprotein complex Integrator, at least composed of IntS1, IntS2, IntS3, IntS4, omd/IntS5, IntS6, defl/IntS7, IntS8, IntS9, IntS10, IntS11, IntS12, asun/IntS13, IntS14 and IntS15. The core complex associates with protein phosphatase 2A subunits mts/PP2A and Pp2A-29B, to form the Integrator-PP2A (INTAC) complex.</text>
</comment>
<comment type="subcellular location">
    <subcellularLocation>
        <location evidence="1">Nucleus</location>
    </subcellularLocation>
    <subcellularLocation>
        <location evidence="1">Cytoplasm</location>
    </subcellularLocation>
    <subcellularLocation>
        <location evidence="1">Cytoplasm</location>
        <location evidence="1">Perinuclear region</location>
    </subcellularLocation>
    <text evidence="1">Colocalizes with dynein-dynactin on the nuclear surface at the meiotic G2/prophase transition in primary spermatocytes. Nuclear location is required for recruitment of dynein motors to nuclear envelope at G2/M.</text>
</comment>
<comment type="PTM">
    <text evidence="1">Phosphorylated.</text>
</comment>
<comment type="similarity">
    <text evidence="4">Belongs to the Integrator subunit 13 family.</text>
</comment>
<organism>
    <name type="scientific">Drosophila ananassae</name>
    <name type="common">Fruit fly</name>
    <dbReference type="NCBI Taxonomy" id="7217"/>
    <lineage>
        <taxon>Eukaryota</taxon>
        <taxon>Metazoa</taxon>
        <taxon>Ecdysozoa</taxon>
        <taxon>Arthropoda</taxon>
        <taxon>Hexapoda</taxon>
        <taxon>Insecta</taxon>
        <taxon>Pterygota</taxon>
        <taxon>Neoptera</taxon>
        <taxon>Endopterygota</taxon>
        <taxon>Diptera</taxon>
        <taxon>Brachycera</taxon>
        <taxon>Muscomorpha</taxon>
        <taxon>Ephydroidea</taxon>
        <taxon>Drosophilidae</taxon>
        <taxon>Drosophila</taxon>
        <taxon>Sophophora</taxon>
    </lineage>
</organism>
<dbReference type="EMBL" id="CH902617">
    <property type="protein sequence ID" value="EDV43675.1"/>
    <property type="molecule type" value="Genomic_DNA"/>
</dbReference>
<dbReference type="SMR" id="B3LVQ1"/>
<dbReference type="FunCoup" id="B3LVQ1">
    <property type="interactions" value="2300"/>
</dbReference>
<dbReference type="STRING" id="7217.B3LVQ1"/>
<dbReference type="EnsemblMetazoa" id="FBtr0121109">
    <property type="protein sequence ID" value="FBpp0119601"/>
    <property type="gene ID" value="FBgn0093430"/>
</dbReference>
<dbReference type="EnsemblMetazoa" id="XM_001955078.4">
    <property type="protein sequence ID" value="XP_001955114.1"/>
    <property type="gene ID" value="LOC6499205"/>
</dbReference>
<dbReference type="GeneID" id="6499205"/>
<dbReference type="KEGG" id="dan:6499205"/>
<dbReference type="CTD" id="41971"/>
<dbReference type="eggNOG" id="KOG3711">
    <property type="taxonomic scope" value="Eukaryota"/>
</dbReference>
<dbReference type="HOGENOM" id="CLU_012654_1_0_1"/>
<dbReference type="InParanoid" id="B3LVQ1"/>
<dbReference type="OMA" id="NCTAMHR"/>
<dbReference type="OrthoDB" id="5844105at2759"/>
<dbReference type="PhylomeDB" id="B3LVQ1"/>
<dbReference type="Proteomes" id="UP000007801">
    <property type="component" value="Unassembled WGS sequence"/>
</dbReference>
<dbReference type="GO" id="GO:0005737">
    <property type="term" value="C:cytoplasm"/>
    <property type="evidence" value="ECO:0000250"/>
    <property type="project" value="UniProtKB"/>
</dbReference>
<dbReference type="GO" id="GO:0032039">
    <property type="term" value="C:integrator complex"/>
    <property type="evidence" value="ECO:0007669"/>
    <property type="project" value="TreeGrafter"/>
</dbReference>
<dbReference type="GO" id="GO:0005634">
    <property type="term" value="C:nucleus"/>
    <property type="evidence" value="ECO:0000250"/>
    <property type="project" value="UniProtKB"/>
</dbReference>
<dbReference type="GO" id="GO:0048471">
    <property type="term" value="C:perinuclear region of cytoplasm"/>
    <property type="evidence" value="ECO:0007669"/>
    <property type="project" value="UniProtKB-SubCell"/>
</dbReference>
<dbReference type="GO" id="GO:0030154">
    <property type="term" value="P:cell differentiation"/>
    <property type="evidence" value="ECO:0007669"/>
    <property type="project" value="UniProtKB-KW"/>
</dbReference>
<dbReference type="GO" id="GO:0051301">
    <property type="term" value="P:cell division"/>
    <property type="evidence" value="ECO:0007669"/>
    <property type="project" value="UniProtKB-KW"/>
</dbReference>
<dbReference type="GO" id="GO:0051642">
    <property type="term" value="P:centrosome localization"/>
    <property type="evidence" value="ECO:0007669"/>
    <property type="project" value="TreeGrafter"/>
</dbReference>
<dbReference type="GO" id="GO:0030317">
    <property type="term" value="P:flagellated sperm motility"/>
    <property type="evidence" value="ECO:0000250"/>
    <property type="project" value="UniProtKB"/>
</dbReference>
<dbReference type="GO" id="GO:0051321">
    <property type="term" value="P:meiotic cell cycle"/>
    <property type="evidence" value="ECO:0007669"/>
    <property type="project" value="UniProtKB-KW"/>
</dbReference>
<dbReference type="GO" id="GO:0080154">
    <property type="term" value="P:regulation of fertilization"/>
    <property type="evidence" value="ECO:0000250"/>
    <property type="project" value="UniProtKB"/>
</dbReference>
<dbReference type="GO" id="GO:0007346">
    <property type="term" value="P:regulation of mitotic cell cycle"/>
    <property type="evidence" value="ECO:0000250"/>
    <property type="project" value="UniProtKB"/>
</dbReference>
<dbReference type="GO" id="GO:0007283">
    <property type="term" value="P:spermatogenesis"/>
    <property type="evidence" value="ECO:0007669"/>
    <property type="project" value="UniProtKB-KW"/>
</dbReference>
<dbReference type="InterPro" id="IPR019355">
    <property type="entry name" value="Cell_cycle_regulator_Mat89Bb"/>
</dbReference>
<dbReference type="PANTHER" id="PTHR12955:SF1">
    <property type="entry name" value="INTEGRATOR COMPLEX SUBUNIT 13"/>
    <property type="match status" value="1"/>
</dbReference>
<dbReference type="PANTHER" id="PTHR12955">
    <property type="entry name" value="SARCOMA ANTIGEN NY-SAR-95-RELATED"/>
    <property type="match status" value="1"/>
</dbReference>
<dbReference type="Pfam" id="PF10221">
    <property type="entry name" value="Mat89Bb"/>
    <property type="match status" value="2"/>
</dbReference>
<gene>
    <name type="primary">asun</name>
    <name type="synonym">Mat89Bb</name>
    <name type="ORF">GF16409</name>
</gene>
<proteinExistence type="inferred from homology"/>
<protein>
    <recommendedName>
        <fullName>Protein asunder</fullName>
    </recommendedName>
    <alternativeName>
        <fullName evidence="1">Cell cycle regulator Mat89Bb</fullName>
    </alternativeName>
    <alternativeName>
        <fullName evidence="1">Maternal transcript 89Bb</fullName>
    </alternativeName>
    <alternativeName>
        <fullName>Set apart in position or space protein</fullName>
    </alternativeName>
</protein>
<reference evidence="5" key="1">
    <citation type="journal article" date="2007" name="Nature">
        <title>Evolution of genes and genomes on the Drosophila phylogeny.</title>
        <authorList>
            <consortium name="Drosophila 12 genomes consortium"/>
        </authorList>
    </citation>
    <scope>NUCLEOTIDE SEQUENCE [LARGE SCALE GENOMIC DNA]</scope>
    <source>
        <strain evidence="5">Tucson 14024-0371.13</strain>
    </source>
</reference>
<evidence type="ECO:0000250" key="1">
    <source>
        <dbReference type="UniProtKB" id="Q9VEX5"/>
    </source>
</evidence>
<evidence type="ECO:0000255" key="2"/>
<evidence type="ECO:0000256" key="3">
    <source>
        <dbReference type="SAM" id="MobiDB-lite"/>
    </source>
</evidence>
<evidence type="ECO:0000305" key="4"/>
<evidence type="ECO:0000312" key="5">
    <source>
        <dbReference type="EMBL" id="EDV43675.1"/>
    </source>
</evidence>
<name>INT13_DROAN</name>